<accession>O54937</accession>
<evidence type="ECO:0000250" key="1"/>
<evidence type="ECO:0000255" key="2"/>
<evidence type="ECO:0000255" key="3">
    <source>
        <dbReference type="PROSITE-ProRule" id="PRU00107"/>
    </source>
</evidence>
<evidence type="ECO:0000269" key="4">
    <source>
    </source>
</evidence>
<evidence type="ECO:0000269" key="5">
    <source>
    </source>
</evidence>
<evidence type="ECO:0000269" key="6">
    <source>
    </source>
</evidence>
<evidence type="ECO:0000269" key="7">
    <source>
    </source>
</evidence>
<evidence type="ECO:0000269" key="8">
    <source>
    </source>
</evidence>
<evidence type="ECO:0000305" key="9"/>
<proteinExistence type="evidence at protein level"/>
<dbReference type="EC" id="2.7.11.2"/>
<dbReference type="EMBL" id="AF034577">
    <property type="protein sequence ID" value="AAC00177.1"/>
    <property type="molecule type" value="mRNA"/>
</dbReference>
<dbReference type="RefSeq" id="NP_446003.1">
    <property type="nucleotide sequence ID" value="NM_053551.1"/>
</dbReference>
<dbReference type="SMR" id="O54937"/>
<dbReference type="FunCoup" id="O54937">
    <property type="interactions" value="1369"/>
</dbReference>
<dbReference type="STRING" id="10116.ENSRNOP00000012759"/>
<dbReference type="BindingDB" id="O54937"/>
<dbReference type="ChEMBL" id="CHEMBL2096663"/>
<dbReference type="GlyGen" id="O54937">
    <property type="glycosylation" value="1 site"/>
</dbReference>
<dbReference type="PhosphoSitePlus" id="O54937"/>
<dbReference type="PaxDb" id="10116-ENSRNOP00000012759"/>
<dbReference type="GeneID" id="89813"/>
<dbReference type="KEGG" id="rno:89813"/>
<dbReference type="UCSC" id="RGD:69061">
    <property type="organism name" value="rat"/>
</dbReference>
<dbReference type="AGR" id="RGD:69061"/>
<dbReference type="CTD" id="5166"/>
<dbReference type="RGD" id="69061">
    <property type="gene designation" value="Pdk4"/>
</dbReference>
<dbReference type="eggNOG" id="KOG0787">
    <property type="taxonomic scope" value="Eukaryota"/>
</dbReference>
<dbReference type="InParanoid" id="O54937"/>
<dbReference type="PhylomeDB" id="O54937"/>
<dbReference type="Reactome" id="R-RNO-204174">
    <property type="pathway name" value="Regulation of pyruvate dehydrogenase (PDH) complex"/>
</dbReference>
<dbReference type="Reactome" id="R-RNO-5362517">
    <property type="pathway name" value="Signaling by Retinoic Acid"/>
</dbReference>
<dbReference type="PRO" id="PR:O54937"/>
<dbReference type="Proteomes" id="UP000002494">
    <property type="component" value="Unplaced"/>
</dbReference>
<dbReference type="GO" id="GO:0005759">
    <property type="term" value="C:mitochondrial matrix"/>
    <property type="evidence" value="ECO:0007669"/>
    <property type="project" value="UniProtKB-SubCell"/>
</dbReference>
<dbReference type="GO" id="GO:0005739">
    <property type="term" value="C:mitochondrion"/>
    <property type="evidence" value="ECO:0000318"/>
    <property type="project" value="GO_Central"/>
</dbReference>
<dbReference type="GO" id="GO:0005524">
    <property type="term" value="F:ATP binding"/>
    <property type="evidence" value="ECO:0000314"/>
    <property type="project" value="RGD"/>
</dbReference>
<dbReference type="GO" id="GO:0004672">
    <property type="term" value="F:protein kinase activity"/>
    <property type="evidence" value="ECO:0000266"/>
    <property type="project" value="RGD"/>
</dbReference>
<dbReference type="GO" id="GO:0004740">
    <property type="term" value="F:pyruvate dehydrogenase (acetyl-transferring) kinase activity"/>
    <property type="evidence" value="ECO:0000314"/>
    <property type="project" value="UniProtKB"/>
</dbReference>
<dbReference type="GO" id="GO:0071398">
    <property type="term" value="P:cellular response to fatty acid"/>
    <property type="evidence" value="ECO:0000250"/>
    <property type="project" value="UniProtKB"/>
</dbReference>
<dbReference type="GO" id="GO:0009267">
    <property type="term" value="P:cellular response to starvation"/>
    <property type="evidence" value="ECO:0000250"/>
    <property type="project" value="UniProtKB"/>
</dbReference>
<dbReference type="GO" id="GO:0042593">
    <property type="term" value="P:glucose homeostasis"/>
    <property type="evidence" value="ECO:0000250"/>
    <property type="project" value="UniProtKB"/>
</dbReference>
<dbReference type="GO" id="GO:0008286">
    <property type="term" value="P:insulin receptor signaling pathway"/>
    <property type="evidence" value="ECO:0000250"/>
    <property type="project" value="UniProtKB"/>
</dbReference>
<dbReference type="GO" id="GO:2000811">
    <property type="term" value="P:negative regulation of anoikis"/>
    <property type="evidence" value="ECO:0000266"/>
    <property type="project" value="RGD"/>
</dbReference>
<dbReference type="GO" id="GO:0006086">
    <property type="term" value="P:pyruvate decarboxylation to acetyl-CoA"/>
    <property type="evidence" value="ECO:0000304"/>
    <property type="project" value="RGD"/>
</dbReference>
<dbReference type="GO" id="GO:0072593">
    <property type="term" value="P:reactive oxygen species metabolic process"/>
    <property type="evidence" value="ECO:0000250"/>
    <property type="project" value="UniProtKB"/>
</dbReference>
<dbReference type="GO" id="GO:0010510">
    <property type="term" value="P:regulation of acetyl-CoA biosynthetic process from pyruvate"/>
    <property type="evidence" value="ECO:0000250"/>
    <property type="project" value="UniProtKB"/>
</dbReference>
<dbReference type="GO" id="GO:0045124">
    <property type="term" value="P:regulation of bone resorption"/>
    <property type="evidence" value="ECO:0000266"/>
    <property type="project" value="RGD"/>
</dbReference>
<dbReference type="GO" id="GO:0042304">
    <property type="term" value="P:regulation of fatty acid biosynthetic process"/>
    <property type="evidence" value="ECO:0000250"/>
    <property type="project" value="UniProtKB"/>
</dbReference>
<dbReference type="GO" id="GO:0046320">
    <property type="term" value="P:regulation of fatty acid oxidation"/>
    <property type="evidence" value="ECO:0000250"/>
    <property type="project" value="UniProtKB"/>
</dbReference>
<dbReference type="GO" id="GO:0010906">
    <property type="term" value="P:regulation of glucose metabolic process"/>
    <property type="evidence" value="ECO:0000250"/>
    <property type="project" value="UniProtKB"/>
</dbReference>
<dbReference type="GO" id="GO:0010565">
    <property type="term" value="P:regulation of ketone metabolic process"/>
    <property type="evidence" value="ECO:0000250"/>
    <property type="project" value="UniProtKB"/>
</dbReference>
<dbReference type="GO" id="GO:0006885">
    <property type="term" value="P:regulation of pH"/>
    <property type="evidence" value="ECO:0000250"/>
    <property type="project" value="UniProtKB"/>
</dbReference>
<dbReference type="GO" id="GO:0042594">
    <property type="term" value="P:response to starvation"/>
    <property type="evidence" value="ECO:0000250"/>
    <property type="project" value="UniProtKB"/>
</dbReference>
<dbReference type="CDD" id="cd16929">
    <property type="entry name" value="HATPase_PDK-like"/>
    <property type="match status" value="1"/>
</dbReference>
<dbReference type="FunFam" id="1.20.140.20:FF:000001">
    <property type="entry name" value="[Pyruvate dehydrogenase (acetyl-transferring)] kinase isozyme 2, mitochondrial"/>
    <property type="match status" value="1"/>
</dbReference>
<dbReference type="FunFam" id="3.30.565.10:FF:000007">
    <property type="entry name" value="Mitochondrial pyruvate dehydrogenase kinase isoform 2"/>
    <property type="match status" value="1"/>
</dbReference>
<dbReference type="Gene3D" id="1.20.140.20">
    <property type="entry name" value="Alpha-ketoacid/pyruvate dehydrogenase kinase, N-terminal domain"/>
    <property type="match status" value="1"/>
</dbReference>
<dbReference type="Gene3D" id="3.30.565.10">
    <property type="entry name" value="Histidine kinase-like ATPase, C-terminal domain"/>
    <property type="match status" value="1"/>
</dbReference>
<dbReference type="InterPro" id="IPR036784">
    <property type="entry name" value="AK/P_DHK_N_sf"/>
</dbReference>
<dbReference type="InterPro" id="IPR018955">
    <property type="entry name" value="BCDHK/PDK_N"/>
</dbReference>
<dbReference type="InterPro" id="IPR039028">
    <property type="entry name" value="BCKD/PDK"/>
</dbReference>
<dbReference type="InterPro" id="IPR036890">
    <property type="entry name" value="HATPase_C_sf"/>
</dbReference>
<dbReference type="InterPro" id="IPR005467">
    <property type="entry name" value="His_kinase_dom"/>
</dbReference>
<dbReference type="PANTHER" id="PTHR11947:SF22">
    <property type="entry name" value="[PYRUVATE DEHYDROGENASE (ACETYL-TRANSFERRING)] KINASE ISOZYME 4, MITOCHONDRIAL"/>
    <property type="match status" value="1"/>
</dbReference>
<dbReference type="PANTHER" id="PTHR11947">
    <property type="entry name" value="PYRUVATE DEHYDROGENASE KINASE"/>
    <property type="match status" value="1"/>
</dbReference>
<dbReference type="Pfam" id="PF10436">
    <property type="entry name" value="BCDHK_Adom3"/>
    <property type="match status" value="1"/>
</dbReference>
<dbReference type="Pfam" id="PF02518">
    <property type="entry name" value="HATPase_c"/>
    <property type="match status" value="1"/>
</dbReference>
<dbReference type="SMART" id="SM00387">
    <property type="entry name" value="HATPase_c"/>
    <property type="match status" value="1"/>
</dbReference>
<dbReference type="SUPFAM" id="SSF69012">
    <property type="entry name" value="alpha-ketoacid dehydrogenase kinase, N-terminal domain"/>
    <property type="match status" value="1"/>
</dbReference>
<dbReference type="SUPFAM" id="SSF55874">
    <property type="entry name" value="ATPase domain of HSP90 chaperone/DNA topoisomerase II/histidine kinase"/>
    <property type="match status" value="1"/>
</dbReference>
<dbReference type="PROSITE" id="PS50109">
    <property type="entry name" value="HIS_KIN"/>
    <property type="match status" value="1"/>
</dbReference>
<reference key="1">
    <citation type="journal article" date="1998" name="Biochem. J.">
        <title>Evidence for existence of tissue-specific regulation of the mammalian pyruvate dehydrogenase complex.</title>
        <authorList>
            <person name="Bowker-Kinley M.M."/>
            <person name="Davis W.I."/>
            <person name="Wu P."/>
            <person name="Harris R.A."/>
            <person name="Popov K.M."/>
        </authorList>
    </citation>
    <scope>NUCLEOTIDE SEQUENCE [MRNA]</scope>
    <scope>CATALYTIC ACTIVITY</scope>
    <scope>TISSUE SPECIFICITY</scope>
</reference>
<reference key="2">
    <citation type="journal article" date="2001" name="J. Biol. Chem.">
        <title>Site specificity of four pyruvate dehydrogenase kinase isoenzymes toward the three phosphorylation sites of human pyruvate dehydrogenase.</title>
        <authorList>
            <person name="Korotchkina L.G."/>
            <person name="Patel M.S."/>
        </authorList>
    </citation>
    <scope>CATALYTIC ACTIVITY</scope>
    <scope>FUNCTION</scope>
</reference>
<reference key="3">
    <citation type="journal article" date="2010" name="Am. J. Physiol.">
        <title>Epinephrine-mediated regulation of PDK4 mRNA in rat adipose tissue.</title>
        <authorList>
            <person name="Wan Z."/>
            <person name="Thrush A.B."/>
            <person name="Legare M."/>
            <person name="Frier B.C."/>
            <person name="Sutherland L.N."/>
            <person name="Williams D.B."/>
            <person name="Wright D.C."/>
        </authorList>
    </citation>
    <scope>INDUCTION BY EXERCISE; FASTING AND EPINEPHRINE</scope>
</reference>
<reference key="4">
    <citation type="journal article" date="2010" name="J. Biol. Chem.">
        <title>Regulation of pyruvate dehydrogenase kinase 4 (PDK4) by thyroid hormone: role of the peroxisome proliferator-activated receptor gamma coactivator (PGC-1 alpha).</title>
        <authorList>
            <person name="Attia R.R."/>
            <person name="Connnaughton S."/>
            <person name="Boone L.R."/>
            <person name="Wang F."/>
            <person name="Elam M.B."/>
            <person name="Ness G.C."/>
            <person name="Cook G.A."/>
            <person name="Park E.A."/>
        </authorList>
    </citation>
    <scope>INDUCTION BY THYROID HORMONE</scope>
</reference>
<reference key="5">
    <citation type="journal article" date="2010" name="Mol. Cell. Endocrinol.">
        <title>Regulation of pyruvate dehydrogenase kinase isoform 4 (PDK4) gene expression by glucocorticoids and insulin.</title>
        <authorList>
            <person name="Connaughton S."/>
            <person name="Chowdhury F."/>
            <person name="Attia R.R."/>
            <person name="Song S."/>
            <person name="Zhang Y."/>
            <person name="Elam M.B."/>
            <person name="Cook G.A."/>
            <person name="Park E.A."/>
        </authorList>
    </citation>
    <scope>INDUCTION BY GLUCOCORTICOIDS AND INSULIN</scope>
</reference>
<sequence length="412" mass="46679">MKAARFVMRSASSLGNAGLVPREVELFSRYSPSPLSMKQLLDFGSENACERTSFSFLRQELPVRLANILKEIDILPEHLVNTPSVQLVKSWYIQSLMDLVEFHEKSPEDQKVLSDFVDTLVKVRNRHHNVVPTMAQGILEYKDNCTVDPVTNQNLQYFLDRFYMNRISTRMLMNQHILIFSDSKTGNPSHIGSIDPNCDVVAVVEDAFECAKMLCDQYYLTSPELKLTQVNGKFPGQPIHIVYVPSHLHHMLFELFKNAMRATVEHQENRPFLTPVEATVVLGKEDLTIKISDRGGGVPLRITDRLFSYTYSTAPTPVMDNSRNAPLAGFGYGLPISRLYAKYFQGDLNLYSMSGYGTDAIIYLKALSSESIEKLPVFNKSAFKHYQMSSEADDWCIPSKEPKNLSKEKLAV</sequence>
<keyword id="KW-0067">ATP-binding</keyword>
<keyword id="KW-0418">Kinase</keyword>
<keyword id="KW-0496">Mitochondrion</keyword>
<keyword id="KW-0547">Nucleotide-binding</keyword>
<keyword id="KW-1185">Reference proteome</keyword>
<keyword id="KW-0808">Transferase</keyword>
<keyword id="KW-0809">Transit peptide</keyword>
<name>PDK4_RAT</name>
<feature type="transit peptide" description="Mitochondrion" evidence="2">
    <location>
        <begin position="1"/>
        <end status="unknown"/>
    </location>
</feature>
<feature type="chain" id="PRO_0000023447" description="[Pyruvate dehydrogenase (acetyl-transferring)] kinase isozyme 4, mitochondrial">
    <location>
        <begin status="unknown"/>
        <end position="412"/>
    </location>
</feature>
<feature type="domain" description="Histidine kinase" evidence="3">
    <location>
        <begin position="138"/>
        <end position="368"/>
    </location>
</feature>
<feature type="binding site" evidence="1">
    <location>
        <begin position="254"/>
        <end position="261"/>
    </location>
    <ligand>
        <name>ATP</name>
        <dbReference type="ChEBI" id="CHEBI:30616"/>
    </ligand>
</feature>
<feature type="binding site" evidence="1">
    <location>
        <position position="293"/>
    </location>
    <ligand>
        <name>ATP</name>
        <dbReference type="ChEBI" id="CHEBI:30616"/>
    </ligand>
</feature>
<feature type="binding site" evidence="1">
    <location>
        <begin position="312"/>
        <end position="313"/>
    </location>
    <ligand>
        <name>ATP</name>
        <dbReference type="ChEBI" id="CHEBI:30616"/>
    </ligand>
</feature>
<feature type="binding site" evidence="1">
    <location>
        <begin position="329"/>
        <end position="334"/>
    </location>
    <ligand>
        <name>ATP</name>
        <dbReference type="ChEBI" id="CHEBI:30616"/>
    </ligand>
</feature>
<feature type="site" description="Interaction with the other subunit in the homodimer" evidence="1">
    <location>
        <position position="157"/>
    </location>
</feature>
<feature type="site" description="Interaction with the other subunit in the homodimer" evidence="1">
    <location>
        <position position="161"/>
    </location>
</feature>
<feature type="site" description="Interaction with the other subunit in the homodimer" evidence="1">
    <location>
        <position position="395"/>
    </location>
</feature>
<gene>
    <name type="primary">Pdk4</name>
</gene>
<protein>
    <recommendedName>
        <fullName>[Pyruvate dehydrogenase (acetyl-transferring)] kinase isozyme 4, mitochondrial</fullName>
        <ecNumber>2.7.11.2</ecNumber>
    </recommendedName>
    <alternativeName>
        <fullName>Pyruvate dehydrogenase kinase isoform 4</fullName>
    </alternativeName>
</protein>
<organism>
    <name type="scientific">Rattus norvegicus</name>
    <name type="common">Rat</name>
    <dbReference type="NCBI Taxonomy" id="10116"/>
    <lineage>
        <taxon>Eukaryota</taxon>
        <taxon>Metazoa</taxon>
        <taxon>Chordata</taxon>
        <taxon>Craniata</taxon>
        <taxon>Vertebrata</taxon>
        <taxon>Euteleostomi</taxon>
        <taxon>Mammalia</taxon>
        <taxon>Eutheria</taxon>
        <taxon>Euarchontoglires</taxon>
        <taxon>Glires</taxon>
        <taxon>Rodentia</taxon>
        <taxon>Myomorpha</taxon>
        <taxon>Muroidea</taxon>
        <taxon>Muridae</taxon>
        <taxon>Murinae</taxon>
        <taxon>Rattus</taxon>
    </lineage>
</organism>
<comment type="function">
    <text evidence="4">Kinase that plays a key role in regulation of glucose and fatty acid metabolism and homeostasis via phosphorylation of the pyruvate dehydrogenase subunits PDHA1 and PDHA2. This inhibits pyruvate dehydrogenase activity, and thereby regulates metabolite flux through the tricarboxylic acid cycle, down-regulates aerobic respiration and inhibits the formation of acetyl-coenzyme A from pyruvate. Inhibition of pyruvate dehydrogenase decreases glucose utilization and increases fat metabolism in response to prolonged fasting and starvation. Plays an important role in maintaining normal blood glucose levels under starvation, and is involved in the insulin signaling cascade. Via its regulation of pyruvate dehydrogenase activity, plays an important role in maintaining normal blood pH and in preventing the accumulation of ketone bodies under starvation. In the fed state, mediates cellular responses to glucose levels and to a high-fat diet. Regulates both fatty acid oxidation and de novo fatty acid biosynthesis. Plays a role in the generation of reactive oxygen species. Protects detached epithelial cells against anoikis. Plays a role in cell proliferation via its role in regulating carbohydrate and fatty acid metabolism.</text>
</comment>
<comment type="catalytic activity">
    <reaction evidence="4 8">
        <text>L-seryl-[pyruvate dehydrogenase E1 alpha subunit] + ATP = O-phospho-L-seryl-[pyruvate dehydrogenase E1 alpha subunit] + ADP + H(+)</text>
        <dbReference type="Rhea" id="RHEA:23052"/>
        <dbReference type="Rhea" id="RHEA-COMP:13689"/>
        <dbReference type="Rhea" id="RHEA-COMP:13690"/>
        <dbReference type="ChEBI" id="CHEBI:15378"/>
        <dbReference type="ChEBI" id="CHEBI:29999"/>
        <dbReference type="ChEBI" id="CHEBI:30616"/>
        <dbReference type="ChEBI" id="CHEBI:83421"/>
        <dbReference type="ChEBI" id="CHEBI:456216"/>
        <dbReference type="EC" id="2.7.11.2"/>
    </reaction>
</comment>
<comment type="subunit">
    <text evidence="1">Homodimer. Interacts with the pyruvate dehydrogenase complex subunit DLAT, and is part of the multimeric pyruvate dehydrogenase complex that contains multiple copies of pyruvate dehydrogenase (E1), dihydrolipoamide acetyltransferase (DLAT, E2) and lipoamide dehydrogenase (DLD, E3) (By similarity).</text>
</comment>
<comment type="subcellular location">
    <subcellularLocation>
        <location>Mitochondrion matrix</location>
    </subcellularLocation>
</comment>
<comment type="tissue specificity">
    <text evidence="8">Ubiquitous; highest levels of expression in heart and skeletal muscle.</text>
</comment>
<comment type="induction">
    <text evidence="5 6 7">Up-regulated by exercise, starvation, glucocorticoids, thyroid hormone and epinephrine. Down-regulated by insulin.</text>
</comment>
<comment type="similarity">
    <text evidence="9">Belongs to the PDK/BCKDK protein kinase family.</text>
</comment>